<reference key="1">
    <citation type="journal article" date="2002" name="Proc. Natl. Acad. Sci. U.S.A.">
        <title>Genome sequence of a serotype M3 strain of group A Streptococcus: phage-encoded toxins, the high-virulence phenotype, and clone emergence.</title>
        <authorList>
            <person name="Beres S.B."/>
            <person name="Sylva G.L."/>
            <person name="Barbian K.D."/>
            <person name="Lei B."/>
            <person name="Hoff J.S."/>
            <person name="Mammarella N.D."/>
            <person name="Liu M.-Y."/>
            <person name="Smoot J.C."/>
            <person name="Porcella S.F."/>
            <person name="Parkins L.D."/>
            <person name="Campbell D.S."/>
            <person name="Smith T.M."/>
            <person name="McCormick J.K."/>
            <person name="Leung D.Y.M."/>
            <person name="Schlievert P.M."/>
            <person name="Musser J.M."/>
        </authorList>
    </citation>
    <scope>NUCLEOTIDE SEQUENCE [LARGE SCALE GENOMIC DNA]</scope>
    <source>
        <strain>ATCC BAA-595 / MGAS315</strain>
    </source>
</reference>
<protein>
    <recommendedName>
        <fullName evidence="1">Elongation factor Ts</fullName>
        <shortName evidence="1">EF-Ts</shortName>
    </recommendedName>
</protein>
<sequence length="346" mass="37257">MAEITAKLVKELREKSGAGVMDAKKALVETDGDMDKAVELLREKGMAKAAKKADRVAAEGLTGVYVHGNVAAVVEVNAETDFVAKNAQFVELVNATAKVIAEGKPANNDEALALVMPSGETLAEAYVNATATIGEKISFRRFALIEKTDEQHFGAYQHNGGRIGVISVVEGGDDALAKQVSMHIAAMKPTVLSYTELDAQFIKDELAQLNHAIELDNESRAMVDKPALPFLKYGSKAQLSDDVITAAEADIKAELAAEGKPEKIWDKIIPGKMDRFMLDNTKVDQAYTLLAQVYIMDDSKTVEAYLDSVNAKAIAFARFEVGEGIEKKANDFESEVAATMAAALNN</sequence>
<dbReference type="EMBL" id="AE014074">
    <property type="protein sequence ID" value="AAM80390.1"/>
    <property type="molecule type" value="Genomic_DNA"/>
</dbReference>
<dbReference type="RefSeq" id="WP_002982258.1">
    <property type="nucleotide sequence ID" value="NC_004070.1"/>
</dbReference>
<dbReference type="SMR" id="P0DA88"/>
<dbReference type="GeneID" id="69901553"/>
<dbReference type="KEGG" id="spg:SpyM3_1783"/>
<dbReference type="HOGENOM" id="CLU_047155_0_1_9"/>
<dbReference type="Proteomes" id="UP000000564">
    <property type="component" value="Chromosome"/>
</dbReference>
<dbReference type="GO" id="GO:0005737">
    <property type="term" value="C:cytoplasm"/>
    <property type="evidence" value="ECO:0007669"/>
    <property type="project" value="UniProtKB-SubCell"/>
</dbReference>
<dbReference type="GO" id="GO:0003746">
    <property type="term" value="F:translation elongation factor activity"/>
    <property type="evidence" value="ECO:0007669"/>
    <property type="project" value="UniProtKB-UniRule"/>
</dbReference>
<dbReference type="CDD" id="cd14275">
    <property type="entry name" value="UBA_EF-Ts"/>
    <property type="match status" value="1"/>
</dbReference>
<dbReference type="FunFam" id="1.10.286.20:FF:000004">
    <property type="entry name" value="Elongation factor Ts"/>
    <property type="match status" value="1"/>
</dbReference>
<dbReference type="FunFam" id="1.10.8.10:FF:000001">
    <property type="entry name" value="Elongation factor Ts"/>
    <property type="match status" value="1"/>
</dbReference>
<dbReference type="FunFam" id="3.30.479.20:FF:000013">
    <property type="entry name" value="Elongation factor Ts"/>
    <property type="match status" value="1"/>
</dbReference>
<dbReference type="Gene3D" id="1.10.286.20">
    <property type="match status" value="1"/>
</dbReference>
<dbReference type="Gene3D" id="1.10.8.10">
    <property type="entry name" value="DNA helicase RuvA subunit, C-terminal domain"/>
    <property type="match status" value="1"/>
</dbReference>
<dbReference type="Gene3D" id="3.30.479.20">
    <property type="entry name" value="Elongation factor Ts, dimerisation domain"/>
    <property type="match status" value="2"/>
</dbReference>
<dbReference type="HAMAP" id="MF_00050">
    <property type="entry name" value="EF_Ts"/>
    <property type="match status" value="1"/>
</dbReference>
<dbReference type="InterPro" id="IPR036402">
    <property type="entry name" value="EF-Ts_dimer_sf"/>
</dbReference>
<dbReference type="InterPro" id="IPR001816">
    <property type="entry name" value="Transl_elong_EFTs/EF1B"/>
</dbReference>
<dbReference type="InterPro" id="IPR014039">
    <property type="entry name" value="Transl_elong_EFTs/EF1B_dimer"/>
</dbReference>
<dbReference type="InterPro" id="IPR018101">
    <property type="entry name" value="Transl_elong_Ts_CS"/>
</dbReference>
<dbReference type="InterPro" id="IPR009060">
    <property type="entry name" value="UBA-like_sf"/>
</dbReference>
<dbReference type="NCBIfam" id="TIGR00116">
    <property type="entry name" value="tsf"/>
    <property type="match status" value="1"/>
</dbReference>
<dbReference type="PANTHER" id="PTHR11741">
    <property type="entry name" value="ELONGATION FACTOR TS"/>
    <property type="match status" value="1"/>
</dbReference>
<dbReference type="PANTHER" id="PTHR11741:SF0">
    <property type="entry name" value="ELONGATION FACTOR TS, MITOCHONDRIAL"/>
    <property type="match status" value="1"/>
</dbReference>
<dbReference type="Pfam" id="PF00889">
    <property type="entry name" value="EF_TS"/>
    <property type="match status" value="1"/>
</dbReference>
<dbReference type="SUPFAM" id="SSF54713">
    <property type="entry name" value="Elongation factor Ts (EF-Ts), dimerisation domain"/>
    <property type="match status" value="1"/>
</dbReference>
<dbReference type="SUPFAM" id="SSF46934">
    <property type="entry name" value="UBA-like"/>
    <property type="match status" value="1"/>
</dbReference>
<dbReference type="PROSITE" id="PS01126">
    <property type="entry name" value="EF_TS_1"/>
    <property type="match status" value="1"/>
</dbReference>
<dbReference type="PROSITE" id="PS01127">
    <property type="entry name" value="EF_TS_2"/>
    <property type="match status" value="1"/>
</dbReference>
<evidence type="ECO:0000255" key="1">
    <source>
        <dbReference type="HAMAP-Rule" id="MF_00050"/>
    </source>
</evidence>
<gene>
    <name evidence="1" type="primary">tsf</name>
    <name type="ordered locus">SpyM3_1783</name>
</gene>
<proteinExistence type="inferred from homology"/>
<keyword id="KW-0963">Cytoplasm</keyword>
<keyword id="KW-0251">Elongation factor</keyword>
<keyword id="KW-0648">Protein biosynthesis</keyword>
<organism>
    <name type="scientific">Streptococcus pyogenes serotype M3 (strain ATCC BAA-595 / MGAS315)</name>
    <dbReference type="NCBI Taxonomy" id="198466"/>
    <lineage>
        <taxon>Bacteria</taxon>
        <taxon>Bacillati</taxon>
        <taxon>Bacillota</taxon>
        <taxon>Bacilli</taxon>
        <taxon>Lactobacillales</taxon>
        <taxon>Streptococcaceae</taxon>
        <taxon>Streptococcus</taxon>
    </lineage>
</organism>
<name>EFTS_STRP3</name>
<feature type="chain" id="PRO_0000161211" description="Elongation factor Ts">
    <location>
        <begin position="1"/>
        <end position="346"/>
    </location>
</feature>
<feature type="region of interest" description="Involved in Mg(2+) ion dislocation from EF-Tu" evidence="1">
    <location>
        <begin position="80"/>
        <end position="83"/>
    </location>
</feature>
<comment type="function">
    <text evidence="1">Associates with the EF-Tu.GDP complex and induces the exchange of GDP to GTP. It remains bound to the aminoacyl-tRNA.EF-Tu.GTP complex up to the GTP hydrolysis stage on the ribosome.</text>
</comment>
<comment type="subcellular location">
    <subcellularLocation>
        <location evidence="1">Cytoplasm</location>
    </subcellularLocation>
</comment>
<comment type="similarity">
    <text evidence="1">Belongs to the EF-Ts family.</text>
</comment>
<accession>P0DA88</accession>
<accession>Q8K5L1</accession>